<sequence length="459" mass="49659">MNRLPSSASALACSAHALNLIEKRTLDHEEMKALNREVIEYFKEHVNPGFLEYRKSVTAGGDYGAVEWQAGGLNTLVDTQGQEFIDCLGGFGIFNVGHRNPVVVSAVQNQLAKQPLHSQELLDPLRAMLAKTLAALTPGKLKYSFFCNSGTESVEAALKLAKAYQSPRGKFTFIATSGVFHGKSLGALSATAKSTFRKPFMPLLPGFRHVPFGNIEAMRTALNECKKTGDDVAAVILEPIQGEGGVILPPPGYLTAVRKLCDEFGALMILDEVQTGMGRTGKMFACEHENVQPDILCLAKALGGGVMPIGATIATEEVFSVLFDNPFLHTTTFGGNPLACAAALATINVLLEQNLPAQAEQKGDMLLDGFRQLAREYPDLVQEARGKGMLMAIEFVDNEIGYNFASEMFRQRVLVAGTLNNAKTIRIEPPLTLTIEQCELVIKAARKALAAMRVSVEEA</sequence>
<organism>
    <name type="scientific">Shigella flexneri serotype 5b (strain 8401)</name>
    <dbReference type="NCBI Taxonomy" id="373384"/>
    <lineage>
        <taxon>Bacteria</taxon>
        <taxon>Pseudomonadati</taxon>
        <taxon>Pseudomonadota</taxon>
        <taxon>Gammaproteobacteria</taxon>
        <taxon>Enterobacterales</taxon>
        <taxon>Enterobacteriaceae</taxon>
        <taxon>Shigella</taxon>
    </lineage>
</organism>
<gene>
    <name evidence="1" type="primary">patA</name>
    <name type="ordered locus">SFV_3114</name>
</gene>
<keyword id="KW-0032">Aminotransferase</keyword>
<keyword id="KW-0663">Pyridoxal phosphate</keyword>
<keyword id="KW-0808">Transferase</keyword>
<accession>Q0T0J2</accession>
<comment type="function">
    <text evidence="1">Catalyzes the aminotransferase reaction from putrescine to 2-oxoglutarate, leading to glutamate and 4-aminobutanal, which spontaneously cyclizes to form 1-pyrroline. This is the first step in one of two pathways for putrescine degradation, where putrescine is converted into 4-aminobutanoate (gamma-aminobutyrate or GABA) via 4-aminobutanal. Also functions as a cadaverine transaminase in a a L-lysine degradation pathway to succinate that proceeds via cadaverine, glutarate and L-2-hydroxyglutarate.</text>
</comment>
<comment type="catalytic activity">
    <reaction evidence="1">
        <text>an alkane-alpha,omega-diamine + 2-oxoglutarate = an omega-aminoaldehyde + L-glutamate</text>
        <dbReference type="Rhea" id="RHEA:18217"/>
        <dbReference type="Rhea" id="RHEA-COMP:9766"/>
        <dbReference type="Rhea" id="RHEA-COMP:12750"/>
        <dbReference type="ChEBI" id="CHEBI:16810"/>
        <dbReference type="ChEBI" id="CHEBI:29985"/>
        <dbReference type="ChEBI" id="CHEBI:70977"/>
        <dbReference type="ChEBI" id="CHEBI:133427"/>
        <dbReference type="EC" id="2.6.1.29"/>
    </reaction>
    <physiologicalReaction direction="left-to-right" evidence="1">
        <dbReference type="Rhea" id="RHEA:18218"/>
    </physiologicalReaction>
</comment>
<comment type="catalytic activity">
    <reaction evidence="1">
        <text>putrescine + 2-oxoglutarate = 1-pyrroline + L-glutamate + H2O</text>
        <dbReference type="Rhea" id="RHEA:12268"/>
        <dbReference type="ChEBI" id="CHEBI:15377"/>
        <dbReference type="ChEBI" id="CHEBI:16810"/>
        <dbReference type="ChEBI" id="CHEBI:29985"/>
        <dbReference type="ChEBI" id="CHEBI:36781"/>
        <dbReference type="ChEBI" id="CHEBI:326268"/>
        <dbReference type="EC" id="2.6.1.82"/>
    </reaction>
    <physiologicalReaction direction="left-to-right" evidence="1">
        <dbReference type="Rhea" id="RHEA:12269"/>
    </physiologicalReaction>
</comment>
<comment type="catalytic activity">
    <reaction evidence="1">
        <text>cadaverine + 2-oxoglutarate = 5-aminopentanal + L-glutamate</text>
        <dbReference type="Rhea" id="RHEA:61624"/>
        <dbReference type="ChEBI" id="CHEBI:16810"/>
        <dbReference type="ChEBI" id="CHEBI:29985"/>
        <dbReference type="ChEBI" id="CHEBI:58384"/>
        <dbReference type="ChEBI" id="CHEBI:144896"/>
    </reaction>
    <physiologicalReaction direction="left-to-right" evidence="1">
        <dbReference type="Rhea" id="RHEA:61625"/>
    </physiologicalReaction>
</comment>
<comment type="cofactor">
    <cofactor evidence="1">
        <name>pyridoxal 5'-phosphate</name>
        <dbReference type="ChEBI" id="CHEBI:597326"/>
    </cofactor>
</comment>
<comment type="pathway">
    <text evidence="1">Amine and polyamine degradation; putrescine degradation; 4-aminobutanal from putrescine (transaminase route): step 1/1.</text>
</comment>
<comment type="similarity">
    <text evidence="1">Belongs to the class-III pyridoxal-phosphate-dependent aminotransferase family. Putrescine aminotransferase subfamily.</text>
</comment>
<reference key="1">
    <citation type="journal article" date="2006" name="BMC Genomics">
        <title>Complete genome sequence of Shigella flexneri 5b and comparison with Shigella flexneri 2a.</title>
        <authorList>
            <person name="Nie H."/>
            <person name="Yang F."/>
            <person name="Zhang X."/>
            <person name="Yang J."/>
            <person name="Chen L."/>
            <person name="Wang J."/>
            <person name="Xiong Z."/>
            <person name="Peng J."/>
            <person name="Sun L."/>
            <person name="Dong J."/>
            <person name="Xue Y."/>
            <person name="Xu X."/>
            <person name="Chen S."/>
            <person name="Yao Z."/>
            <person name="Shen Y."/>
            <person name="Jin Q."/>
        </authorList>
    </citation>
    <scope>NUCLEOTIDE SEQUENCE [LARGE SCALE GENOMIC DNA]</scope>
    <source>
        <strain>8401</strain>
    </source>
</reference>
<feature type="chain" id="PRO_1000067398" description="Putrescine aminotransferase">
    <location>
        <begin position="1"/>
        <end position="459"/>
    </location>
</feature>
<feature type="binding site" description="in other chain" evidence="1">
    <location>
        <begin position="150"/>
        <end position="151"/>
    </location>
    <ligand>
        <name>pyridoxal 5'-phosphate</name>
        <dbReference type="ChEBI" id="CHEBI:597326"/>
        <note>ligand shared between dimeric partners</note>
    </ligand>
</feature>
<feature type="binding site" description="in other chain" evidence="1">
    <location>
        <position position="274"/>
    </location>
    <ligand>
        <name>pyridoxal 5'-phosphate</name>
        <dbReference type="ChEBI" id="CHEBI:597326"/>
        <note>ligand shared between dimeric partners</note>
    </ligand>
</feature>
<feature type="binding site" evidence="1">
    <location>
        <position position="332"/>
    </location>
    <ligand>
        <name>pyridoxal 5'-phosphate</name>
        <dbReference type="ChEBI" id="CHEBI:597326"/>
        <note>ligand shared between dimeric partners</note>
    </ligand>
</feature>
<feature type="modified residue" description="N6-(pyridoxal phosphate)lysine" evidence="1">
    <location>
        <position position="300"/>
    </location>
</feature>
<dbReference type="EC" id="2.6.1.82" evidence="1"/>
<dbReference type="EC" id="2.6.1.29" evidence="1"/>
<dbReference type="EMBL" id="CP000266">
    <property type="protein sequence ID" value="ABF05173.1"/>
    <property type="molecule type" value="Genomic_DNA"/>
</dbReference>
<dbReference type="SMR" id="Q0T0J2"/>
<dbReference type="KEGG" id="sfv:SFV_3114"/>
<dbReference type="HOGENOM" id="CLU_016922_10_0_6"/>
<dbReference type="UniPathway" id="UPA00188">
    <property type="reaction ID" value="UER00290"/>
</dbReference>
<dbReference type="Proteomes" id="UP000000659">
    <property type="component" value="Chromosome"/>
</dbReference>
<dbReference type="GO" id="GO:0019161">
    <property type="term" value="F:diamine transaminase activity"/>
    <property type="evidence" value="ECO:0007669"/>
    <property type="project" value="UniProtKB-EC"/>
</dbReference>
<dbReference type="GO" id="GO:0042802">
    <property type="term" value="F:identical protein binding"/>
    <property type="evidence" value="ECO:0007669"/>
    <property type="project" value="TreeGrafter"/>
</dbReference>
<dbReference type="GO" id="GO:0033094">
    <property type="term" value="F:putrescine--2-oxoglutarate transaminase activity"/>
    <property type="evidence" value="ECO:0007669"/>
    <property type="project" value="UniProtKB-UniRule"/>
</dbReference>
<dbReference type="GO" id="GO:0030170">
    <property type="term" value="F:pyridoxal phosphate binding"/>
    <property type="evidence" value="ECO:0007669"/>
    <property type="project" value="UniProtKB-UniRule"/>
</dbReference>
<dbReference type="GO" id="GO:0019477">
    <property type="term" value="P:L-lysine catabolic process"/>
    <property type="evidence" value="ECO:0007669"/>
    <property type="project" value="UniProtKB-UniRule"/>
</dbReference>
<dbReference type="GO" id="GO:0009447">
    <property type="term" value="P:putrescine catabolic process"/>
    <property type="evidence" value="ECO:0007669"/>
    <property type="project" value="UniProtKB-UniRule"/>
</dbReference>
<dbReference type="CDD" id="cd00610">
    <property type="entry name" value="OAT_like"/>
    <property type="match status" value="1"/>
</dbReference>
<dbReference type="FunFam" id="3.40.640.10:FF:000004">
    <property type="entry name" value="Acetylornithine aminotransferase"/>
    <property type="match status" value="1"/>
</dbReference>
<dbReference type="Gene3D" id="3.90.1150.10">
    <property type="entry name" value="Aspartate Aminotransferase, domain 1"/>
    <property type="match status" value="1"/>
</dbReference>
<dbReference type="Gene3D" id="3.40.640.10">
    <property type="entry name" value="Type I PLP-dependent aspartate aminotransferase-like (Major domain)"/>
    <property type="match status" value="1"/>
</dbReference>
<dbReference type="HAMAP" id="MF_01276">
    <property type="entry name" value="Putres_aminotrans_3"/>
    <property type="match status" value="1"/>
</dbReference>
<dbReference type="InterPro" id="IPR005814">
    <property type="entry name" value="Aminotrans_3"/>
</dbReference>
<dbReference type="InterPro" id="IPR049704">
    <property type="entry name" value="Aminotrans_3_PPA_site"/>
</dbReference>
<dbReference type="InterPro" id="IPR050103">
    <property type="entry name" value="Class-III_PLP-dep_AT"/>
</dbReference>
<dbReference type="InterPro" id="IPR017747">
    <property type="entry name" value="Putrescine_aminotransferase"/>
</dbReference>
<dbReference type="InterPro" id="IPR015424">
    <property type="entry name" value="PyrdxlP-dep_Trfase"/>
</dbReference>
<dbReference type="InterPro" id="IPR015421">
    <property type="entry name" value="PyrdxlP-dep_Trfase_major"/>
</dbReference>
<dbReference type="InterPro" id="IPR015422">
    <property type="entry name" value="PyrdxlP-dep_Trfase_small"/>
</dbReference>
<dbReference type="NCBIfam" id="NF008570">
    <property type="entry name" value="PRK11522.1"/>
    <property type="match status" value="1"/>
</dbReference>
<dbReference type="NCBIfam" id="TIGR03372">
    <property type="entry name" value="putres_am_tran"/>
    <property type="match status" value="1"/>
</dbReference>
<dbReference type="PANTHER" id="PTHR11986">
    <property type="entry name" value="AMINOTRANSFERASE CLASS III"/>
    <property type="match status" value="1"/>
</dbReference>
<dbReference type="PANTHER" id="PTHR11986:SF112">
    <property type="entry name" value="PUTRESCINE AMINOTRANSFERASE"/>
    <property type="match status" value="1"/>
</dbReference>
<dbReference type="Pfam" id="PF00202">
    <property type="entry name" value="Aminotran_3"/>
    <property type="match status" value="1"/>
</dbReference>
<dbReference type="PIRSF" id="PIRSF000521">
    <property type="entry name" value="Transaminase_4ab_Lys_Orn"/>
    <property type="match status" value="1"/>
</dbReference>
<dbReference type="SUPFAM" id="SSF53383">
    <property type="entry name" value="PLP-dependent transferases"/>
    <property type="match status" value="1"/>
</dbReference>
<dbReference type="PROSITE" id="PS00600">
    <property type="entry name" value="AA_TRANSFER_CLASS_3"/>
    <property type="match status" value="1"/>
</dbReference>
<name>PAT_SHIF8</name>
<evidence type="ECO:0000255" key="1">
    <source>
        <dbReference type="HAMAP-Rule" id="MF_01276"/>
    </source>
</evidence>
<protein>
    <recommendedName>
        <fullName evidence="1">Putrescine aminotransferase</fullName>
        <shortName evidence="1">PAT</shortName>
        <shortName evidence="1">PATase</shortName>
        <ecNumber evidence="1">2.6.1.82</ecNumber>
    </recommendedName>
    <alternativeName>
        <fullName evidence="1">Cadaverine transaminase</fullName>
    </alternativeName>
    <alternativeName>
        <fullName evidence="1">Diamine transaminase</fullName>
        <ecNumber evidence="1">2.6.1.29</ecNumber>
    </alternativeName>
    <alternativeName>
        <fullName evidence="1">Putrescine transaminase</fullName>
    </alternativeName>
    <alternativeName>
        <fullName evidence="1">Putrescine--2-oxoglutaric acid transaminase</fullName>
    </alternativeName>
</protein>
<proteinExistence type="inferred from homology"/>